<organism>
    <name type="scientific">KI polyomavirus (isolate Stockholm 380)</name>
    <name type="common">KIPyV</name>
    <dbReference type="NCBI Taxonomy" id="423448"/>
    <lineage>
        <taxon>Viruses</taxon>
        <taxon>Monodnaviria</taxon>
        <taxon>Shotokuvirae</taxon>
        <taxon>Cossaviricota</taxon>
        <taxon>Papovaviricetes</taxon>
        <taxon>Sepolyvirales</taxon>
        <taxon>Polyomaviridae</taxon>
        <taxon>Betapolyomavirus</taxon>
        <taxon>Betapolyomavirus tertihominis</taxon>
    </lineage>
</organism>
<accession>P0DOJ3</accession>
<accession>A3R4M6</accession>
<accession>A3R4M7</accession>
<accession>A3R4N1</accession>
<accession>A3R4N2</accession>
<accession>A3R4N6</accession>
<accession>A3R4N7</accession>
<evidence type="ECO:0000250" key="1"/>
<evidence type="ECO:0000250" key="2">
    <source>
        <dbReference type="UniProtKB" id="P03093"/>
    </source>
</evidence>
<evidence type="ECO:0000256" key="3">
    <source>
        <dbReference type="SAM" id="MobiDB-lite"/>
    </source>
</evidence>
<evidence type="ECO:0000305" key="4"/>
<reference key="1">
    <citation type="journal article" date="2007" name="J. Virol.">
        <title>Identification of a third human polyomavirus.</title>
        <authorList>
            <person name="Allander T."/>
            <person name="Andreasson K."/>
            <person name="Gupta S."/>
            <person name="Bjerkner A."/>
            <person name="Bogdanovic G."/>
            <person name="Persson M.A."/>
            <person name="Dalianis T."/>
            <person name="Ramqvist T."/>
            <person name="Andersson B."/>
        </authorList>
    </citation>
    <scope>NUCLEOTIDE SEQUENCE [GENOMIC DNA]</scope>
</reference>
<reference key="2">
    <citation type="journal article" date="2009" name="Virology">
        <title>The Polyomaviridae: Contributions of virus structure to our understanding of virus receptors and infectious entry.</title>
        <authorList>
            <person name="Neu U."/>
            <person name="Stehle T."/>
            <person name="Atwood W.J."/>
        </authorList>
    </citation>
    <scope>REVIEW</scope>
</reference>
<proteinExistence type="inferred from homology"/>
<keyword id="KW-0024">Alternative initiation</keyword>
<keyword id="KW-0025">Alternative splicing</keyword>
<keyword id="KW-0167">Capsid protein</keyword>
<keyword id="KW-1038">Host endoplasmic reticulum</keyword>
<keyword id="KW-1043">Host membrane</keyword>
<keyword id="KW-1048">Host nucleus</keyword>
<keyword id="KW-0426">Late protein</keyword>
<keyword id="KW-0449">Lipoprotein</keyword>
<keyword id="KW-0472">Membrane</keyword>
<keyword id="KW-0519">Myristate</keyword>
<keyword id="KW-1163">Viral penetration into host nucleus</keyword>
<keyword id="KW-0946">Virion</keyword>
<keyword id="KW-1160">Virus entry into host cell</keyword>
<organismHost>
    <name type="scientific">Homo sapiens</name>
    <name type="common">Human</name>
    <dbReference type="NCBI Taxonomy" id="9606"/>
</organismHost>
<name>VP2_POVK3</name>
<sequence>MGIFLAVPEIIAASIAGGAEALSIAGSGAAIATGEGLAALGGITEGAALLGETIPISEAATTVLTKVPELVQATQAVTAAVQGGAGLVGGIYTALASDHPGDLPPNTPTGSASGLHPTSGYNPQGAGLNLQSVHKPIHAPYSGMALVPIPEYQLETGIPGIPDWLFNLVASYLPELPSLQDVFNRIAFGIWSSYYNAGSTVVNRVLSDEIQRLLRDLEYGFRATLASIGESDPVNAIATQVRSLATTARERELLQITAGQPLDLSRPTSALSAAAGALTEAAYNFIYDASSLPKDGFNALSEGVHRLGQWISFSGPTGGTPHYATPDWILYVLEQLNADTYKIPTQAVKRKQDELHPVSPTKKANKAKKSSSPGTNSGNRSKKRRGRSTSRSTTVRRNRI</sequence>
<protein>
    <recommendedName>
        <fullName>Minor capsid protein VP2</fullName>
    </recommendedName>
    <alternativeName>
        <fullName>Minor structural protein VP2</fullName>
    </alternativeName>
</protein>
<dbReference type="EMBL" id="EF127908">
    <property type="protein sequence ID" value="ABN09928.1"/>
    <property type="molecule type" value="Genomic_DNA"/>
</dbReference>
<dbReference type="EMBL" id="EF127908">
    <property type="protein sequence ID" value="ABN09929.1"/>
    <property type="molecule type" value="Genomic_DNA"/>
</dbReference>
<dbReference type="Proteomes" id="UP000166765">
    <property type="component" value="Genome"/>
</dbReference>
<dbReference type="GO" id="GO:0043657">
    <property type="term" value="C:host cell"/>
    <property type="evidence" value="ECO:0007669"/>
    <property type="project" value="GOC"/>
</dbReference>
<dbReference type="GO" id="GO:0044167">
    <property type="term" value="C:host cell endoplasmic reticulum membrane"/>
    <property type="evidence" value="ECO:0007669"/>
    <property type="project" value="UniProtKB-SubCell"/>
</dbReference>
<dbReference type="GO" id="GO:0042025">
    <property type="term" value="C:host cell nucleus"/>
    <property type="evidence" value="ECO:0007669"/>
    <property type="project" value="UniProtKB-SubCell"/>
</dbReference>
<dbReference type="GO" id="GO:0016020">
    <property type="term" value="C:membrane"/>
    <property type="evidence" value="ECO:0007669"/>
    <property type="project" value="UniProtKB-KW"/>
</dbReference>
<dbReference type="GO" id="GO:0019028">
    <property type="term" value="C:viral capsid"/>
    <property type="evidence" value="ECO:0007669"/>
    <property type="project" value="UniProtKB-KW"/>
</dbReference>
<dbReference type="GO" id="GO:0046718">
    <property type="term" value="P:symbiont entry into host cell"/>
    <property type="evidence" value="ECO:0007669"/>
    <property type="project" value="UniProtKB-KW"/>
</dbReference>
<dbReference type="GO" id="GO:0075732">
    <property type="term" value="P:viral penetration into host nucleus"/>
    <property type="evidence" value="ECO:0007669"/>
    <property type="project" value="UniProtKB-KW"/>
</dbReference>
<comment type="function">
    <text evidence="2">Isoform VP2 is a structural protein that resides within the core of the capsid surrounded by 72 VP1 pentamers. Participates in host cell receptor binding together with VP1. Following virus endocytosis and trafficking to the endoplasmic reticulum, VP2 and VP3 form oligomers and integrate into the endoplasmic reticulum membrane. Heterooligomer VP2-VP3 may create a viroporin for transporting the viral genome across the endoplasmic reticulum membrane to the cytoplasm. Nuclear entry of the viral DNA involves the selective exposure and importin recognition of VP2 or VP3 nuclear localization signal (shared C-terminus). Plays a role in virion assembly within the nucleus in particular through a DNA-binding domain located in the C-terminal region. A N-terminal myristoylation suggests a scaffold function for virion assembly.</text>
</comment>
<comment type="function">
    <molecule>Isoform VP3</molecule>
    <text evidence="2">Structural protein that resides within the core of the capsid surrounded by 72 VP1 pentamers. Following virus endocytosis and trafficking to the endoplasmic reticulum, VP2 and VP3 form oligomers and integrate into the endoplasmic reticulum membrane. Heterooligomer VP2-VP3 may create a viroporin for transporting the viral genome across the endoplasmic reticulum membrane to the cytoplasm. Nuclear entry of the viral DNA involves the selective exposure and importin recognition of VP2 or VP3 nuclear localization signal (shared C-terminus). Plays a role in virion assembly within the nucleus.</text>
</comment>
<comment type="subunit">
    <molecule>Isoform VP2</molecule>
    <text evidence="2">Forms homooligomers, and heterooligomers with VP3 in the endoplasmic reticulum membrane. Interacts (via D1 domain) with VP1.</text>
</comment>
<comment type="subunit">
    <molecule>Isoform VP3</molecule>
    <text>Interacts (via D1 domain) with VP1.</text>
</comment>
<comment type="subcellular location">
    <molecule>Isoform VP2</molecule>
    <subcellularLocation>
        <location evidence="4">Virion</location>
    </subcellularLocation>
    <subcellularLocation>
        <location evidence="2">Host nucleus</location>
    </subcellularLocation>
    <subcellularLocation>
        <location evidence="2">Host endoplasmic reticulum</location>
    </subcellularLocation>
    <subcellularLocation>
        <location evidence="2">Host endoplasmic reticulum membrane</location>
    </subcellularLocation>
    <text evidence="2">Following host cell entry, the virion enters into the endoplasmic reticulum through a calveolar-dependent pathway. Then, isoform VP2 integrates into the endoplasmic reticulum membrane and participates in the translocation of viral DNA to the nucleus. Shortly after synthesis, a nuclear localization signal directs isoform VP2 to the cell nucleus where virion assembly occurs.</text>
</comment>
<comment type="subcellular location">
    <molecule>Isoform VP3</molecule>
    <subcellularLocation>
        <location evidence="4">Virion</location>
    </subcellularLocation>
    <subcellularLocation>
        <location evidence="2">Host nucleus</location>
    </subcellularLocation>
    <subcellularLocation>
        <location evidence="2">Host endoplasmic reticulum</location>
    </subcellularLocation>
    <subcellularLocation>
        <location evidence="2">Host endoplasmic reticulum membrane</location>
    </subcellularLocation>
    <text evidence="2">Following host cell entry, the virion enters into the endoplasmic reticulum through a calveolar-dependent pathway. Then, isoform VP3 integrates into the endoplasmic reticulum membrane and participates in the translocation of viral DNA to the nucleus. Shortly after synthesis, a nuclear localization signal directs isoform VP3 to the cell nucleus where virion assembly occurs.</text>
</comment>
<comment type="alternative products">
    <event type="alternative splicing"/>
    <event type="alternative initiation"/>
    <isoform>
        <id>P0DOJ3-1</id>
        <id>A3R4N1-1</id>
        <name>VP2</name>
        <name>Minor capsid protein VP2</name>
        <sequence type="displayed"/>
    </isoform>
    <isoform>
        <id>P0DOJ3-2</id>
        <id>A3R4N1-2</id>
        <name>VP3</name>
        <name>Minor capsid protein VP3</name>
        <sequence type="described" ref="VSP_059273"/>
    </isoform>
    <isoform>
        <id>P0DOI4-1</id>
        <id>A3R4N3-1</id>
        <name>VP1</name>
        <sequence type="external"/>
    </isoform>
</comment>
<comment type="miscellaneous">
    <molecule>Isoform VP2</molecule>
    <text>Produced by alternative splicing of the late mRNA.</text>
</comment>
<comment type="miscellaneous">
    <molecule>Isoform VP3</molecule>
    <text evidence="4">Produced by alternative initiation at Met-144 of isoform VP2.</text>
</comment>
<comment type="similarity">
    <text evidence="4">Belongs to the polyomaviruses capsid protein VP2 family.</text>
</comment>
<feature type="initiator methionine" description="Removed; by host" evidence="1">
    <location>
        <position position="1"/>
    </location>
</feature>
<feature type="chain" id="PRO_0000442713" description="Minor capsid protein VP2">
    <location>
        <begin position="2"/>
        <end position="400"/>
    </location>
</feature>
<feature type="region of interest" description="Disordered" evidence="3">
    <location>
        <begin position="99"/>
        <end position="118"/>
    </location>
</feature>
<feature type="region of interest" description="D1" evidence="1">
    <location>
        <begin position="307"/>
        <end position="342"/>
    </location>
</feature>
<feature type="region of interest" description="DNA-binding" evidence="1">
    <location>
        <begin position="347"/>
        <end position="394"/>
    </location>
</feature>
<feature type="region of interest" description="Disordered" evidence="3">
    <location>
        <begin position="348"/>
        <end position="400"/>
    </location>
</feature>
<feature type="short sequence motif" description="Nuclear localization signal" evidence="1">
    <location>
        <begin position="359"/>
        <end position="369"/>
    </location>
</feature>
<feature type="compositionally biased region" description="Low complexity" evidence="3">
    <location>
        <begin position="370"/>
        <end position="379"/>
    </location>
</feature>
<feature type="compositionally biased region" description="Basic residues" evidence="3">
    <location>
        <begin position="380"/>
        <end position="400"/>
    </location>
</feature>
<feature type="lipid moiety-binding region" description="N-myristoyl glycine; by host" evidence="1">
    <location>
        <position position="2"/>
    </location>
</feature>
<feature type="splice variant" id="VSP_059273" description="In isoform VP3." evidence="4">
    <location>
        <begin position="1"/>
        <end position="143"/>
    </location>
</feature>